<evidence type="ECO:0000255" key="1">
    <source>
        <dbReference type="HAMAP-Rule" id="MF_01307"/>
    </source>
</evidence>
<evidence type="ECO:0000305" key="2"/>
<protein>
    <recommendedName>
        <fullName evidence="1">Small ribosomal subunit protein uS5</fullName>
    </recommendedName>
    <alternativeName>
        <fullName evidence="2">30S ribosomal protein S5</fullName>
    </alternativeName>
</protein>
<feature type="chain" id="PRO_0000323114" description="Small ribosomal subunit protein uS5">
    <location>
        <begin position="1"/>
        <end position="166"/>
    </location>
</feature>
<feature type="domain" description="S5 DRBM" evidence="1">
    <location>
        <begin position="11"/>
        <end position="74"/>
    </location>
</feature>
<organism>
    <name type="scientific">Acetivibrio thermocellus (strain ATCC 27405 / DSM 1237 / JCM 9322 / NBRC 103400 / NCIMB 10682 / NRRL B-4536 / VPI 7372)</name>
    <name type="common">Clostridium thermocellum</name>
    <dbReference type="NCBI Taxonomy" id="203119"/>
    <lineage>
        <taxon>Bacteria</taxon>
        <taxon>Bacillati</taxon>
        <taxon>Bacillota</taxon>
        <taxon>Clostridia</taxon>
        <taxon>Eubacteriales</taxon>
        <taxon>Oscillospiraceae</taxon>
        <taxon>Acetivibrio</taxon>
    </lineage>
</organism>
<keyword id="KW-1185">Reference proteome</keyword>
<keyword id="KW-0687">Ribonucleoprotein</keyword>
<keyword id="KW-0689">Ribosomal protein</keyword>
<keyword id="KW-0694">RNA-binding</keyword>
<keyword id="KW-0699">rRNA-binding</keyword>
<proteinExistence type="inferred from homology"/>
<reference key="1">
    <citation type="submission" date="2007-02" db="EMBL/GenBank/DDBJ databases">
        <title>Complete sequence of Clostridium thermocellum ATCC 27405.</title>
        <authorList>
            <consortium name="US DOE Joint Genome Institute"/>
            <person name="Copeland A."/>
            <person name="Lucas S."/>
            <person name="Lapidus A."/>
            <person name="Barry K."/>
            <person name="Detter J.C."/>
            <person name="Glavina del Rio T."/>
            <person name="Hammon N."/>
            <person name="Israni S."/>
            <person name="Dalin E."/>
            <person name="Tice H."/>
            <person name="Pitluck S."/>
            <person name="Chertkov O."/>
            <person name="Brettin T."/>
            <person name="Bruce D."/>
            <person name="Han C."/>
            <person name="Tapia R."/>
            <person name="Gilna P."/>
            <person name="Schmutz J."/>
            <person name="Larimer F."/>
            <person name="Land M."/>
            <person name="Hauser L."/>
            <person name="Kyrpides N."/>
            <person name="Mikhailova N."/>
            <person name="Wu J.H.D."/>
            <person name="Newcomb M."/>
            <person name="Richardson P."/>
        </authorList>
    </citation>
    <scope>NUCLEOTIDE SEQUENCE [LARGE SCALE GENOMIC DNA]</scope>
    <source>
        <strain>ATCC 27405 / DSM 1237 / JCM 9322 / NBRC 103400 / NCIMB 10682 / NRRL B-4536 / VPI 7372</strain>
    </source>
</reference>
<sequence>MQRIDASVLDLKEKVVNIGRVTKVVKGGRNFRFSALVVVGDENGHVGSGMGKAAEIPDAIRKGIEDAKKNLIKVPIVNTTIPHEVIGEFGAGKVLLKPAQPGTGVIAGGPVRAVLELAGIKDIRTKSLGSNNPINMVHATIEGLSRLKTAEEVAKLRNKTVEEILG</sequence>
<accession>A3DJI9</accession>
<comment type="function">
    <text evidence="1">With S4 and S12 plays an important role in translational accuracy.</text>
</comment>
<comment type="function">
    <text evidence="1">Located at the back of the 30S subunit body where it stabilizes the conformation of the head with respect to the body.</text>
</comment>
<comment type="subunit">
    <text evidence="1">Part of the 30S ribosomal subunit. Contacts proteins S4 and S8.</text>
</comment>
<comment type="domain">
    <text>The N-terminal domain interacts with the head of the 30S subunit; the C-terminal domain interacts with the body and contacts protein S4. The interaction surface between S4 and S5 is involved in control of translational fidelity.</text>
</comment>
<comment type="similarity">
    <text evidence="1">Belongs to the universal ribosomal protein uS5 family.</text>
</comment>
<dbReference type="EMBL" id="CP000568">
    <property type="protein sequence ID" value="ABN54118.1"/>
    <property type="molecule type" value="Genomic_DNA"/>
</dbReference>
<dbReference type="RefSeq" id="WP_003514656.1">
    <property type="nucleotide sequence ID" value="NC_009012.1"/>
</dbReference>
<dbReference type="SMR" id="A3DJI9"/>
<dbReference type="STRING" id="203119.Cthe_2920"/>
<dbReference type="GeneID" id="35803437"/>
<dbReference type="KEGG" id="cth:Cthe_2920"/>
<dbReference type="eggNOG" id="COG0098">
    <property type="taxonomic scope" value="Bacteria"/>
</dbReference>
<dbReference type="HOGENOM" id="CLU_065898_2_2_9"/>
<dbReference type="OrthoDB" id="9809045at2"/>
<dbReference type="Proteomes" id="UP000002145">
    <property type="component" value="Chromosome"/>
</dbReference>
<dbReference type="GO" id="GO:0015935">
    <property type="term" value="C:small ribosomal subunit"/>
    <property type="evidence" value="ECO:0007669"/>
    <property type="project" value="InterPro"/>
</dbReference>
<dbReference type="GO" id="GO:0019843">
    <property type="term" value="F:rRNA binding"/>
    <property type="evidence" value="ECO:0007669"/>
    <property type="project" value="UniProtKB-UniRule"/>
</dbReference>
<dbReference type="GO" id="GO:0003735">
    <property type="term" value="F:structural constituent of ribosome"/>
    <property type="evidence" value="ECO:0007669"/>
    <property type="project" value="InterPro"/>
</dbReference>
<dbReference type="GO" id="GO:0006412">
    <property type="term" value="P:translation"/>
    <property type="evidence" value="ECO:0007669"/>
    <property type="project" value="UniProtKB-UniRule"/>
</dbReference>
<dbReference type="FunFam" id="3.30.160.20:FF:000001">
    <property type="entry name" value="30S ribosomal protein S5"/>
    <property type="match status" value="1"/>
</dbReference>
<dbReference type="FunFam" id="3.30.230.10:FF:000002">
    <property type="entry name" value="30S ribosomal protein S5"/>
    <property type="match status" value="1"/>
</dbReference>
<dbReference type="Gene3D" id="3.30.160.20">
    <property type="match status" value="1"/>
</dbReference>
<dbReference type="Gene3D" id="3.30.230.10">
    <property type="match status" value="1"/>
</dbReference>
<dbReference type="HAMAP" id="MF_01307_B">
    <property type="entry name" value="Ribosomal_uS5_B"/>
    <property type="match status" value="1"/>
</dbReference>
<dbReference type="InterPro" id="IPR020568">
    <property type="entry name" value="Ribosomal_Su5_D2-typ_SF"/>
</dbReference>
<dbReference type="InterPro" id="IPR000851">
    <property type="entry name" value="Ribosomal_uS5"/>
</dbReference>
<dbReference type="InterPro" id="IPR005712">
    <property type="entry name" value="Ribosomal_uS5_bac-type"/>
</dbReference>
<dbReference type="InterPro" id="IPR005324">
    <property type="entry name" value="Ribosomal_uS5_C"/>
</dbReference>
<dbReference type="InterPro" id="IPR013810">
    <property type="entry name" value="Ribosomal_uS5_N"/>
</dbReference>
<dbReference type="InterPro" id="IPR018192">
    <property type="entry name" value="Ribosomal_uS5_N_CS"/>
</dbReference>
<dbReference type="InterPro" id="IPR014721">
    <property type="entry name" value="Ribsml_uS5_D2-typ_fold_subgr"/>
</dbReference>
<dbReference type="NCBIfam" id="TIGR01021">
    <property type="entry name" value="rpsE_bact"/>
    <property type="match status" value="1"/>
</dbReference>
<dbReference type="PANTHER" id="PTHR48277">
    <property type="entry name" value="MITOCHONDRIAL RIBOSOMAL PROTEIN S5"/>
    <property type="match status" value="1"/>
</dbReference>
<dbReference type="PANTHER" id="PTHR48277:SF1">
    <property type="entry name" value="MITOCHONDRIAL RIBOSOMAL PROTEIN S5"/>
    <property type="match status" value="1"/>
</dbReference>
<dbReference type="Pfam" id="PF00333">
    <property type="entry name" value="Ribosomal_S5"/>
    <property type="match status" value="1"/>
</dbReference>
<dbReference type="Pfam" id="PF03719">
    <property type="entry name" value="Ribosomal_S5_C"/>
    <property type="match status" value="1"/>
</dbReference>
<dbReference type="SUPFAM" id="SSF54768">
    <property type="entry name" value="dsRNA-binding domain-like"/>
    <property type="match status" value="1"/>
</dbReference>
<dbReference type="SUPFAM" id="SSF54211">
    <property type="entry name" value="Ribosomal protein S5 domain 2-like"/>
    <property type="match status" value="1"/>
</dbReference>
<dbReference type="PROSITE" id="PS00585">
    <property type="entry name" value="RIBOSOMAL_S5"/>
    <property type="match status" value="1"/>
</dbReference>
<dbReference type="PROSITE" id="PS50881">
    <property type="entry name" value="S5_DSRBD"/>
    <property type="match status" value="1"/>
</dbReference>
<name>RS5_ACET2</name>
<gene>
    <name evidence="1" type="primary">rpsE</name>
    <name type="ordered locus">Cthe_2920</name>
</gene>